<accession>Q03D45</accession>
<protein>
    <recommendedName>
        <fullName evidence="1">Small ribosomal subunit protein bS18</fullName>
    </recommendedName>
    <alternativeName>
        <fullName evidence="2">30S ribosomal protein S18</fullName>
    </alternativeName>
</protein>
<evidence type="ECO:0000255" key="1">
    <source>
        <dbReference type="HAMAP-Rule" id="MF_00270"/>
    </source>
</evidence>
<evidence type="ECO:0000305" key="2"/>
<feature type="chain" id="PRO_1000003515" description="Small ribosomal subunit protein bS18">
    <location>
        <begin position="1"/>
        <end position="78"/>
    </location>
</feature>
<keyword id="KW-1185">Reference proteome</keyword>
<keyword id="KW-0687">Ribonucleoprotein</keyword>
<keyword id="KW-0689">Ribosomal protein</keyword>
<keyword id="KW-0694">RNA-binding</keyword>
<keyword id="KW-0699">rRNA-binding</keyword>
<sequence>MAQQRRGGRRRRKVDFIAANHIEYIDYKDTNLLDRFISERGKILPRRVTGTSAKNQRKLTIAIKRARIMGLLPFVSED</sequence>
<name>RS18_LACP3</name>
<dbReference type="EMBL" id="CP000423">
    <property type="protein sequence ID" value="ABJ68877.1"/>
    <property type="molecule type" value="Genomic_DNA"/>
</dbReference>
<dbReference type="RefSeq" id="WP_003568467.1">
    <property type="nucleotide sequence ID" value="NC_008526.1"/>
</dbReference>
<dbReference type="RefSeq" id="YP_805319.1">
    <property type="nucleotide sequence ID" value="NC_008526.1"/>
</dbReference>
<dbReference type="SMR" id="Q03D45"/>
<dbReference type="STRING" id="321967.LSEI_0011"/>
<dbReference type="PaxDb" id="321967-LSEI_0011"/>
<dbReference type="GeneID" id="93267739"/>
<dbReference type="KEGG" id="lca:LSEI_0011"/>
<dbReference type="PATRIC" id="fig|321967.11.peg.46"/>
<dbReference type="HOGENOM" id="CLU_148710_2_2_9"/>
<dbReference type="PRO" id="PR:Q03D45"/>
<dbReference type="Proteomes" id="UP000001651">
    <property type="component" value="Chromosome"/>
</dbReference>
<dbReference type="GO" id="GO:0022627">
    <property type="term" value="C:cytosolic small ribosomal subunit"/>
    <property type="evidence" value="ECO:0007669"/>
    <property type="project" value="TreeGrafter"/>
</dbReference>
<dbReference type="GO" id="GO:0070181">
    <property type="term" value="F:small ribosomal subunit rRNA binding"/>
    <property type="evidence" value="ECO:0007669"/>
    <property type="project" value="TreeGrafter"/>
</dbReference>
<dbReference type="GO" id="GO:0003735">
    <property type="term" value="F:structural constituent of ribosome"/>
    <property type="evidence" value="ECO:0007669"/>
    <property type="project" value="InterPro"/>
</dbReference>
<dbReference type="GO" id="GO:0006412">
    <property type="term" value="P:translation"/>
    <property type="evidence" value="ECO:0007669"/>
    <property type="project" value="UniProtKB-UniRule"/>
</dbReference>
<dbReference type="FunFam" id="4.10.640.10:FF:000003">
    <property type="entry name" value="30S ribosomal protein S18"/>
    <property type="match status" value="1"/>
</dbReference>
<dbReference type="Gene3D" id="4.10.640.10">
    <property type="entry name" value="Ribosomal protein S18"/>
    <property type="match status" value="1"/>
</dbReference>
<dbReference type="HAMAP" id="MF_00270">
    <property type="entry name" value="Ribosomal_bS18"/>
    <property type="match status" value="1"/>
</dbReference>
<dbReference type="InterPro" id="IPR001648">
    <property type="entry name" value="Ribosomal_bS18"/>
</dbReference>
<dbReference type="InterPro" id="IPR018275">
    <property type="entry name" value="Ribosomal_bS18_CS"/>
</dbReference>
<dbReference type="InterPro" id="IPR036870">
    <property type="entry name" value="Ribosomal_bS18_sf"/>
</dbReference>
<dbReference type="NCBIfam" id="TIGR00165">
    <property type="entry name" value="S18"/>
    <property type="match status" value="1"/>
</dbReference>
<dbReference type="PANTHER" id="PTHR13479">
    <property type="entry name" value="30S RIBOSOMAL PROTEIN S18"/>
    <property type="match status" value="1"/>
</dbReference>
<dbReference type="PANTHER" id="PTHR13479:SF40">
    <property type="entry name" value="SMALL RIBOSOMAL SUBUNIT PROTEIN BS18M"/>
    <property type="match status" value="1"/>
</dbReference>
<dbReference type="Pfam" id="PF01084">
    <property type="entry name" value="Ribosomal_S18"/>
    <property type="match status" value="1"/>
</dbReference>
<dbReference type="PRINTS" id="PR00974">
    <property type="entry name" value="RIBOSOMALS18"/>
</dbReference>
<dbReference type="SUPFAM" id="SSF46911">
    <property type="entry name" value="Ribosomal protein S18"/>
    <property type="match status" value="1"/>
</dbReference>
<dbReference type="PROSITE" id="PS00057">
    <property type="entry name" value="RIBOSOMAL_S18"/>
    <property type="match status" value="1"/>
</dbReference>
<comment type="function">
    <text evidence="1">Binds as a heterodimer with protein bS6 to the central domain of the 16S rRNA, where it helps stabilize the platform of the 30S subunit.</text>
</comment>
<comment type="subunit">
    <text evidence="1">Part of the 30S ribosomal subunit. Forms a tight heterodimer with protein bS6.</text>
</comment>
<comment type="similarity">
    <text evidence="1">Belongs to the bacterial ribosomal protein bS18 family.</text>
</comment>
<reference key="1">
    <citation type="journal article" date="2006" name="Proc. Natl. Acad. Sci. U.S.A.">
        <title>Comparative genomics of the lactic acid bacteria.</title>
        <authorList>
            <person name="Makarova K.S."/>
            <person name="Slesarev A."/>
            <person name="Wolf Y.I."/>
            <person name="Sorokin A."/>
            <person name="Mirkin B."/>
            <person name="Koonin E.V."/>
            <person name="Pavlov A."/>
            <person name="Pavlova N."/>
            <person name="Karamychev V."/>
            <person name="Polouchine N."/>
            <person name="Shakhova V."/>
            <person name="Grigoriev I."/>
            <person name="Lou Y."/>
            <person name="Rohksar D."/>
            <person name="Lucas S."/>
            <person name="Huang K."/>
            <person name="Goodstein D.M."/>
            <person name="Hawkins T."/>
            <person name="Plengvidhya V."/>
            <person name="Welker D."/>
            <person name="Hughes J."/>
            <person name="Goh Y."/>
            <person name="Benson A."/>
            <person name="Baldwin K."/>
            <person name="Lee J.-H."/>
            <person name="Diaz-Muniz I."/>
            <person name="Dosti B."/>
            <person name="Smeianov V."/>
            <person name="Wechter W."/>
            <person name="Barabote R."/>
            <person name="Lorca G."/>
            <person name="Altermann E."/>
            <person name="Barrangou R."/>
            <person name="Ganesan B."/>
            <person name="Xie Y."/>
            <person name="Rawsthorne H."/>
            <person name="Tamir D."/>
            <person name="Parker C."/>
            <person name="Breidt F."/>
            <person name="Broadbent J.R."/>
            <person name="Hutkins R."/>
            <person name="O'Sullivan D."/>
            <person name="Steele J."/>
            <person name="Unlu G."/>
            <person name="Saier M.H. Jr."/>
            <person name="Klaenhammer T."/>
            <person name="Richardson P."/>
            <person name="Kozyavkin S."/>
            <person name="Weimer B.C."/>
            <person name="Mills D.A."/>
        </authorList>
    </citation>
    <scope>NUCLEOTIDE SEQUENCE [LARGE SCALE GENOMIC DNA]</scope>
    <source>
        <strain>ATCC 334 / BCRC 17002 / CCUG 31169 / CIP 107868 / KCTC 3260 / NRRL B-441</strain>
    </source>
</reference>
<organism>
    <name type="scientific">Lacticaseibacillus paracasei (strain ATCC 334 / BCRC 17002 / CCUG 31169 / CIP 107868 / KCTC 3260 / NRRL B-441)</name>
    <name type="common">Lactobacillus paracasei</name>
    <dbReference type="NCBI Taxonomy" id="321967"/>
    <lineage>
        <taxon>Bacteria</taxon>
        <taxon>Bacillati</taxon>
        <taxon>Bacillota</taxon>
        <taxon>Bacilli</taxon>
        <taxon>Lactobacillales</taxon>
        <taxon>Lactobacillaceae</taxon>
        <taxon>Lacticaseibacillus</taxon>
    </lineage>
</organism>
<proteinExistence type="inferred from homology"/>
<gene>
    <name evidence="1" type="primary">rpsR</name>
    <name type="ordered locus">LSEI_0011</name>
</gene>